<sequence>MENTTRTWVFPKLDTRQFVLLAMLMALHMVLSRLTVGTNVLQVSFAFVTMSLIAKWYGPLWSMLIAAILDVIGATIINPGAFFVGFTFTAMISALIYSLAYFKHDKTSWWRVSVAVGLVLLIANIGLNSIWLVMMYHTAHDWPSFLAFITPRVIKNLIMFPIQVGISYFLLNNQVISHTTKKIFS</sequence>
<protein>
    <recommendedName>
        <fullName>Folate transporter FolT</fullName>
    </recommendedName>
    <alternativeName>
        <fullName>Folate ECF transporter S component FolT</fullName>
    </alternativeName>
</protein>
<gene>
    <name type="primary">folT</name>
    <name type="ordered locus">LEUM_0142</name>
</gene>
<feature type="chain" id="PRO_0000409017" description="Folate transporter FolT">
    <location>
        <begin position="1"/>
        <end position="185"/>
    </location>
</feature>
<feature type="transmembrane region" description="Helical" evidence="2">
    <location>
        <begin position="34"/>
        <end position="54"/>
    </location>
</feature>
<feature type="transmembrane region" description="Helical" evidence="2">
    <location>
        <begin position="64"/>
        <end position="84"/>
    </location>
</feature>
<feature type="transmembrane region" description="Helical" evidence="2">
    <location>
        <begin position="114"/>
        <end position="134"/>
    </location>
</feature>
<feature type="transmembrane region" description="Helical" evidence="2">
    <location>
        <begin position="157"/>
        <end position="177"/>
    </location>
</feature>
<evidence type="ECO:0000250" key="1"/>
<evidence type="ECO:0000255" key="2"/>
<evidence type="ECO:0000269" key="3">
    <source>
    </source>
</evidence>
<evidence type="ECO:0000305" key="4">
    <source>
    </source>
</evidence>
<name>FOLT_LEUMM</name>
<organism>
    <name type="scientific">Leuconostoc mesenteroides subsp. mesenteroides (strain ATCC 8293 / DSM 20343 / BCRC 11652 / CCM 1803 / JCM 6124 / NCDO 523 / NBRC 100496 / NCIMB 8023 / NCTC 12954 / NRRL B-1118 / 37Y)</name>
    <dbReference type="NCBI Taxonomy" id="203120"/>
    <lineage>
        <taxon>Bacteria</taxon>
        <taxon>Bacillati</taxon>
        <taxon>Bacillota</taxon>
        <taxon>Bacilli</taxon>
        <taxon>Lactobacillales</taxon>
        <taxon>Lactobacillaceae</taxon>
        <taxon>Leuconostoc</taxon>
    </lineage>
</organism>
<accession>Q03ZT0</accession>
<proteinExistence type="evidence at protein level"/>
<reference key="1">
    <citation type="journal article" date="2006" name="Proc. Natl. Acad. Sci. U.S.A.">
        <title>Comparative genomics of the lactic acid bacteria.</title>
        <authorList>
            <person name="Makarova K.S."/>
            <person name="Slesarev A."/>
            <person name="Wolf Y.I."/>
            <person name="Sorokin A."/>
            <person name="Mirkin B."/>
            <person name="Koonin E.V."/>
            <person name="Pavlov A."/>
            <person name="Pavlova N."/>
            <person name="Karamychev V."/>
            <person name="Polouchine N."/>
            <person name="Shakhova V."/>
            <person name="Grigoriev I."/>
            <person name="Lou Y."/>
            <person name="Rohksar D."/>
            <person name="Lucas S."/>
            <person name="Huang K."/>
            <person name="Goodstein D.M."/>
            <person name="Hawkins T."/>
            <person name="Plengvidhya V."/>
            <person name="Welker D."/>
            <person name="Hughes J."/>
            <person name="Goh Y."/>
            <person name="Benson A."/>
            <person name="Baldwin K."/>
            <person name="Lee J.-H."/>
            <person name="Diaz-Muniz I."/>
            <person name="Dosti B."/>
            <person name="Smeianov V."/>
            <person name="Wechter W."/>
            <person name="Barabote R."/>
            <person name="Lorca G."/>
            <person name="Altermann E."/>
            <person name="Barrangou R."/>
            <person name="Ganesan B."/>
            <person name="Xie Y."/>
            <person name="Rawsthorne H."/>
            <person name="Tamir D."/>
            <person name="Parker C."/>
            <person name="Breidt F."/>
            <person name="Broadbent J.R."/>
            <person name="Hutkins R."/>
            <person name="O'Sullivan D."/>
            <person name="Steele J."/>
            <person name="Unlu G."/>
            <person name="Saier M.H. Jr."/>
            <person name="Klaenhammer T."/>
            <person name="Richardson P."/>
            <person name="Kozyavkin S."/>
            <person name="Weimer B.C."/>
            <person name="Mills D.A."/>
        </authorList>
    </citation>
    <scope>NUCLEOTIDE SEQUENCE [LARGE SCALE GENOMIC DNA]</scope>
    <source>
        <strain>ATCC 8293 / DSM 20343 / BCRC 11652 / CCM 1803 / JCM 6124 / NCDO 523 / NBRC 100496 / NCIMB 8023 / NCTC 12954 / NRRL B-1118 / 37Y</strain>
    </source>
</reference>
<reference key="2">
    <citation type="journal article" date="2009" name="J. Bacteriol.">
        <title>A novel class of modular transporters for vitamins in prokaryotes.</title>
        <authorList>
            <person name="Rodionov D.A."/>
            <person name="Hebbeln P."/>
            <person name="Eudes A."/>
            <person name="ter Beek J."/>
            <person name="Rodionova I.A."/>
            <person name="Erkens G.B."/>
            <person name="Slotboom D.J."/>
            <person name="Gelfand M.S."/>
            <person name="Osterman A.L."/>
            <person name="Hanson A.D."/>
            <person name="Eitinger T."/>
        </authorList>
    </citation>
    <scope>FUNCTION AS A TRANSPORT COMPONENT</scope>
    <scope>SUBUNIT</scope>
    <scope>SUBCELLULAR LOCATION</scope>
    <scope>EXPRESSION IN E.COLI</scope>
    <source>
        <strain>ATCC 8293 / DSM 20343 / BCRC 11652 / CCM 1803 / JCM 6124 / NCDO 523 / NBRC 100496 / NCIMB 8023 / NCTC 12954 / NRRL B-1118 / 37Y</strain>
    </source>
</reference>
<dbReference type="EMBL" id="CP000414">
    <property type="protein sequence ID" value="ABJ61292.1"/>
    <property type="molecule type" value="Genomic_DNA"/>
</dbReference>
<dbReference type="RefSeq" id="WP_011679104.1">
    <property type="nucleotide sequence ID" value="NC_008531.1"/>
</dbReference>
<dbReference type="SMR" id="Q03ZT0"/>
<dbReference type="EnsemblBacteria" id="ABJ61292">
    <property type="protein sequence ID" value="ABJ61292"/>
    <property type="gene ID" value="LEUM_0142"/>
</dbReference>
<dbReference type="GeneID" id="29575832"/>
<dbReference type="KEGG" id="lme:LEUM_0142"/>
<dbReference type="eggNOG" id="COG4720">
    <property type="taxonomic scope" value="Bacteria"/>
</dbReference>
<dbReference type="HOGENOM" id="CLU_098232_3_0_9"/>
<dbReference type="Proteomes" id="UP000000362">
    <property type="component" value="Chromosome"/>
</dbReference>
<dbReference type="GO" id="GO:0005886">
    <property type="term" value="C:plasma membrane"/>
    <property type="evidence" value="ECO:0007669"/>
    <property type="project" value="UniProtKB-SubCell"/>
</dbReference>
<dbReference type="GO" id="GO:0005542">
    <property type="term" value="F:folic acid binding"/>
    <property type="evidence" value="ECO:0007669"/>
    <property type="project" value="UniProtKB-KW"/>
</dbReference>
<dbReference type="GO" id="GO:0022857">
    <property type="term" value="F:transmembrane transporter activity"/>
    <property type="evidence" value="ECO:0007669"/>
    <property type="project" value="InterPro"/>
</dbReference>
<dbReference type="Gene3D" id="1.10.1760.20">
    <property type="match status" value="1"/>
</dbReference>
<dbReference type="InterPro" id="IPR030949">
    <property type="entry name" value="ECF_S_folate_fam"/>
</dbReference>
<dbReference type="InterPro" id="IPR024529">
    <property type="entry name" value="ECF_trnsprt_substrate-spec"/>
</dbReference>
<dbReference type="NCBIfam" id="TIGR04518">
    <property type="entry name" value="ECF_S_folT_fam"/>
    <property type="match status" value="1"/>
</dbReference>
<dbReference type="Pfam" id="PF12822">
    <property type="entry name" value="ECF_trnsprt"/>
    <property type="match status" value="1"/>
</dbReference>
<comment type="function">
    <text evidence="1 3">Folate-binding protein that interacts with the energy-coupling factor (ECF) ABC-transporter complex. Unlike classic ABC transporters this ECF transporter provides the energy necessary to transport a number of different substrates. The substrates themselves are bound by transmembrane, not extracytoplasmic soluble proteins (By similarity). Upon coexpression with EcfA1A2T in E.coli allows 5-formyltetrahydrofolate uptake; uptake requires both FolT and EcfA1A2T.</text>
</comment>
<comment type="subunit">
    <text evidence="3">In E.coli forms a stable energy-coupling factor (ECF) transporter complex probably composed of a membrane-embedded substrate-binding protein (S component), two ATP-binding proteins (A components) and a transmembrane protein (T component).</text>
</comment>
<comment type="subcellular location">
    <subcellularLocation>
        <location evidence="4">Cell membrane</location>
        <topology evidence="4">Multi-pass membrane protein</topology>
    </subcellularLocation>
</comment>
<keyword id="KW-1003">Cell membrane</keyword>
<keyword id="KW-0290">Folate-binding</keyword>
<keyword id="KW-0472">Membrane</keyword>
<keyword id="KW-1185">Reference proteome</keyword>
<keyword id="KW-0812">Transmembrane</keyword>
<keyword id="KW-1133">Transmembrane helix</keyword>
<keyword id="KW-0813">Transport</keyword>